<organism>
    <name type="scientific">Methanosarcina acetivorans (strain ATCC 35395 / DSM 2834 / JCM 12185 / C2A)</name>
    <dbReference type="NCBI Taxonomy" id="188937"/>
    <lineage>
        <taxon>Archaea</taxon>
        <taxon>Methanobacteriati</taxon>
        <taxon>Methanobacteriota</taxon>
        <taxon>Stenosarchaea group</taxon>
        <taxon>Methanomicrobia</taxon>
        <taxon>Methanosarcinales</taxon>
        <taxon>Methanosarcinaceae</taxon>
        <taxon>Methanosarcina</taxon>
    </lineage>
</organism>
<dbReference type="EC" id="6.5.1.1" evidence="1"/>
<dbReference type="EMBL" id="AE010299">
    <property type="protein sequence ID" value="AAM05952.1"/>
    <property type="molecule type" value="Genomic_DNA"/>
</dbReference>
<dbReference type="RefSeq" id="WP_011022536.1">
    <property type="nucleotide sequence ID" value="NC_003552.1"/>
</dbReference>
<dbReference type="SMR" id="Q8TMT1"/>
<dbReference type="FunCoup" id="Q8TMT1">
    <property type="interactions" value="150"/>
</dbReference>
<dbReference type="STRING" id="188937.MA_2571"/>
<dbReference type="EnsemblBacteria" id="AAM05952">
    <property type="protein sequence ID" value="AAM05952"/>
    <property type="gene ID" value="MA_2571"/>
</dbReference>
<dbReference type="GeneID" id="1474460"/>
<dbReference type="KEGG" id="mac:MA_2571"/>
<dbReference type="HOGENOM" id="CLU_005138_6_0_2"/>
<dbReference type="InParanoid" id="Q8TMT1"/>
<dbReference type="OrthoDB" id="31274at2157"/>
<dbReference type="PhylomeDB" id="Q8TMT1"/>
<dbReference type="Proteomes" id="UP000002487">
    <property type="component" value="Chromosome"/>
</dbReference>
<dbReference type="GO" id="GO:0005524">
    <property type="term" value="F:ATP binding"/>
    <property type="evidence" value="ECO:0007669"/>
    <property type="project" value="UniProtKB-UniRule"/>
</dbReference>
<dbReference type="GO" id="GO:0003677">
    <property type="term" value="F:DNA binding"/>
    <property type="evidence" value="ECO:0007669"/>
    <property type="project" value="InterPro"/>
</dbReference>
<dbReference type="GO" id="GO:0003910">
    <property type="term" value="F:DNA ligase (ATP) activity"/>
    <property type="evidence" value="ECO:0000318"/>
    <property type="project" value="GO_Central"/>
</dbReference>
<dbReference type="GO" id="GO:0046872">
    <property type="term" value="F:metal ion binding"/>
    <property type="evidence" value="ECO:0007669"/>
    <property type="project" value="UniProtKB-KW"/>
</dbReference>
<dbReference type="GO" id="GO:0051301">
    <property type="term" value="P:cell division"/>
    <property type="evidence" value="ECO:0007669"/>
    <property type="project" value="UniProtKB-KW"/>
</dbReference>
<dbReference type="GO" id="GO:0071897">
    <property type="term" value="P:DNA biosynthetic process"/>
    <property type="evidence" value="ECO:0007669"/>
    <property type="project" value="InterPro"/>
</dbReference>
<dbReference type="GO" id="GO:0006310">
    <property type="term" value="P:DNA recombination"/>
    <property type="evidence" value="ECO:0007669"/>
    <property type="project" value="UniProtKB-UniRule"/>
</dbReference>
<dbReference type="GO" id="GO:0006281">
    <property type="term" value="P:DNA repair"/>
    <property type="evidence" value="ECO:0007669"/>
    <property type="project" value="UniProtKB-UniRule"/>
</dbReference>
<dbReference type="GO" id="GO:0006273">
    <property type="term" value="P:lagging strand elongation"/>
    <property type="evidence" value="ECO:0000318"/>
    <property type="project" value="GO_Central"/>
</dbReference>
<dbReference type="CDD" id="cd07901">
    <property type="entry name" value="Adenylation_DNA_ligase_Arch_LigB"/>
    <property type="match status" value="1"/>
</dbReference>
<dbReference type="CDD" id="cd07972">
    <property type="entry name" value="OBF_DNA_ligase_Arch_LigB"/>
    <property type="match status" value="1"/>
</dbReference>
<dbReference type="FunFam" id="1.10.3260.10:FF:000007">
    <property type="entry name" value="DNA ligase"/>
    <property type="match status" value="1"/>
</dbReference>
<dbReference type="FunFam" id="2.40.50.140:FF:000163">
    <property type="entry name" value="Probable DNA ligase"/>
    <property type="match status" value="1"/>
</dbReference>
<dbReference type="FunFam" id="3.30.470.30:FF:000012">
    <property type="entry name" value="Probable DNA ligase"/>
    <property type="match status" value="1"/>
</dbReference>
<dbReference type="Gene3D" id="1.10.3260.10">
    <property type="entry name" value="DNA ligase, ATP-dependent, N-terminal domain"/>
    <property type="match status" value="1"/>
</dbReference>
<dbReference type="Gene3D" id="3.30.470.30">
    <property type="entry name" value="DNA ligase/mRNA capping enzyme"/>
    <property type="match status" value="1"/>
</dbReference>
<dbReference type="Gene3D" id="2.40.50.140">
    <property type="entry name" value="Nucleic acid-binding proteins"/>
    <property type="match status" value="1"/>
</dbReference>
<dbReference type="HAMAP" id="MF_00407">
    <property type="entry name" value="DNA_ligase"/>
    <property type="match status" value="1"/>
</dbReference>
<dbReference type="InterPro" id="IPR050191">
    <property type="entry name" value="ATP-dep_DNA_ligase"/>
</dbReference>
<dbReference type="InterPro" id="IPR022865">
    <property type="entry name" value="DNA_ligae_ATP-dep_bac/arc"/>
</dbReference>
<dbReference type="InterPro" id="IPR000977">
    <property type="entry name" value="DNA_ligase_ATP-dep"/>
</dbReference>
<dbReference type="InterPro" id="IPR012309">
    <property type="entry name" value="DNA_ligase_ATP-dep_C"/>
</dbReference>
<dbReference type="InterPro" id="IPR012310">
    <property type="entry name" value="DNA_ligase_ATP-dep_cent"/>
</dbReference>
<dbReference type="InterPro" id="IPR016059">
    <property type="entry name" value="DNA_ligase_ATP-dep_CS"/>
</dbReference>
<dbReference type="InterPro" id="IPR012308">
    <property type="entry name" value="DNA_ligase_ATP-dep_N"/>
</dbReference>
<dbReference type="InterPro" id="IPR036599">
    <property type="entry name" value="DNA_ligase_N_sf"/>
</dbReference>
<dbReference type="InterPro" id="IPR012340">
    <property type="entry name" value="NA-bd_OB-fold"/>
</dbReference>
<dbReference type="NCBIfam" id="TIGR00574">
    <property type="entry name" value="dnl1"/>
    <property type="match status" value="1"/>
</dbReference>
<dbReference type="PANTHER" id="PTHR45674:SF7">
    <property type="entry name" value="DNA LIGASE"/>
    <property type="match status" value="1"/>
</dbReference>
<dbReference type="PANTHER" id="PTHR45674">
    <property type="entry name" value="DNA LIGASE 1/3 FAMILY MEMBER"/>
    <property type="match status" value="1"/>
</dbReference>
<dbReference type="Pfam" id="PF04679">
    <property type="entry name" value="DNA_ligase_A_C"/>
    <property type="match status" value="1"/>
</dbReference>
<dbReference type="Pfam" id="PF01068">
    <property type="entry name" value="DNA_ligase_A_M"/>
    <property type="match status" value="1"/>
</dbReference>
<dbReference type="Pfam" id="PF04675">
    <property type="entry name" value="DNA_ligase_A_N"/>
    <property type="match status" value="1"/>
</dbReference>
<dbReference type="SUPFAM" id="SSF117018">
    <property type="entry name" value="ATP-dependent DNA ligase DNA-binding domain"/>
    <property type="match status" value="1"/>
</dbReference>
<dbReference type="SUPFAM" id="SSF56091">
    <property type="entry name" value="DNA ligase/mRNA capping enzyme, catalytic domain"/>
    <property type="match status" value="1"/>
</dbReference>
<dbReference type="SUPFAM" id="SSF50249">
    <property type="entry name" value="Nucleic acid-binding proteins"/>
    <property type="match status" value="1"/>
</dbReference>
<dbReference type="PROSITE" id="PS00697">
    <property type="entry name" value="DNA_LIGASE_A1"/>
    <property type="match status" value="1"/>
</dbReference>
<dbReference type="PROSITE" id="PS50160">
    <property type="entry name" value="DNA_LIGASE_A3"/>
    <property type="match status" value="1"/>
</dbReference>
<feature type="chain" id="PRO_0000059603" description="DNA ligase 2">
    <location>
        <begin position="1"/>
        <end position="568"/>
    </location>
</feature>
<feature type="active site" description="N6-AMP-lysine intermediate" evidence="1">
    <location>
        <position position="256"/>
    </location>
</feature>
<feature type="binding site" evidence="1">
    <location>
        <position position="254"/>
    </location>
    <ligand>
        <name>ATP</name>
        <dbReference type="ChEBI" id="CHEBI:30616"/>
    </ligand>
</feature>
<feature type="binding site" evidence="1">
    <location>
        <position position="261"/>
    </location>
    <ligand>
        <name>ATP</name>
        <dbReference type="ChEBI" id="CHEBI:30616"/>
    </ligand>
</feature>
<feature type="binding site" evidence="1">
    <location>
        <position position="276"/>
    </location>
    <ligand>
        <name>ATP</name>
        <dbReference type="ChEBI" id="CHEBI:30616"/>
    </ligand>
</feature>
<feature type="binding site" evidence="1">
    <location>
        <position position="306"/>
    </location>
    <ligand>
        <name>ATP</name>
        <dbReference type="ChEBI" id="CHEBI:30616"/>
    </ligand>
</feature>
<feature type="binding site" evidence="1">
    <location>
        <position position="346"/>
    </location>
    <ligand>
        <name>ATP</name>
        <dbReference type="ChEBI" id="CHEBI:30616"/>
    </ligand>
</feature>
<feature type="binding site" evidence="1">
    <location>
        <position position="425"/>
    </location>
    <ligand>
        <name>ATP</name>
        <dbReference type="ChEBI" id="CHEBI:30616"/>
    </ligand>
</feature>
<feature type="binding site" evidence="1">
    <location>
        <position position="431"/>
    </location>
    <ligand>
        <name>ATP</name>
        <dbReference type="ChEBI" id="CHEBI:30616"/>
    </ligand>
</feature>
<sequence>MTSFREFAETCQAIEKISSTIETTNKVADLLKKVDVEELPLATHFIMSEVFPAWSGEQLGIGTSLLYSSLSKASGMSVRSIESLIRTTGDIGETALLILKEKRKNQVTFSSFLEEQPELSITEVYQRFKTASEASGKGSQELKIKNLQFLFNSSTPREAKYISRLALEELRIGVGEGVVRDAIARAFSVPSDKVEHAFMVTNDLGIVAAAAKEGGIEALESLGIEINRPIKMMLSQISPDIDADIRDMKGAAIEWKFDGARVQIHKNGNSVTLFSRKLENVTNSLPDLVEIIRKHVKAESAILDGEAVAVDENGKPRAFQEILKRFRRKYDVEEKALGIPIQLNLFDIMYLNGRTLIDLPLVERRKALESCVESSVEDSKSISVDEQVITGDLELVEKIYREALNAGHEGVMVKNPNSAYSPGKRGKNWLKKKPLMETLDLVVVGAEWGYGRRANLIGSYSVACYDPETSRFLQVGKVGTGLTDEQLKELTEMLSGLMEGGEAGGVFAIRPKVVLEIAFEEIQKSPNYDSGFALRFPRFIRIRDDKDPEEADTIQRIGRVYSQQLKRL</sequence>
<protein>
    <recommendedName>
        <fullName evidence="1">DNA ligase 2</fullName>
        <ecNumber evidence="1">6.5.1.1</ecNumber>
    </recommendedName>
    <alternativeName>
        <fullName evidence="1">Polydeoxyribonucleotide synthase [ATP] 2</fullName>
    </alternativeName>
</protein>
<evidence type="ECO:0000255" key="1">
    <source>
        <dbReference type="HAMAP-Rule" id="MF_00407"/>
    </source>
</evidence>
<accession>Q8TMT1</accession>
<reference key="1">
    <citation type="journal article" date="2002" name="Genome Res.">
        <title>The genome of Methanosarcina acetivorans reveals extensive metabolic and physiological diversity.</title>
        <authorList>
            <person name="Galagan J.E."/>
            <person name="Nusbaum C."/>
            <person name="Roy A."/>
            <person name="Endrizzi M.G."/>
            <person name="Macdonald P."/>
            <person name="FitzHugh W."/>
            <person name="Calvo S."/>
            <person name="Engels R."/>
            <person name="Smirnov S."/>
            <person name="Atnoor D."/>
            <person name="Brown A."/>
            <person name="Allen N."/>
            <person name="Naylor J."/>
            <person name="Stange-Thomann N."/>
            <person name="DeArellano K."/>
            <person name="Johnson R."/>
            <person name="Linton L."/>
            <person name="McEwan P."/>
            <person name="McKernan K."/>
            <person name="Talamas J."/>
            <person name="Tirrell A."/>
            <person name="Ye W."/>
            <person name="Zimmer A."/>
            <person name="Barber R.D."/>
            <person name="Cann I."/>
            <person name="Graham D.E."/>
            <person name="Grahame D.A."/>
            <person name="Guss A.M."/>
            <person name="Hedderich R."/>
            <person name="Ingram-Smith C."/>
            <person name="Kuettner H.C."/>
            <person name="Krzycki J.A."/>
            <person name="Leigh J.A."/>
            <person name="Li W."/>
            <person name="Liu J."/>
            <person name="Mukhopadhyay B."/>
            <person name="Reeve J.N."/>
            <person name="Smith K."/>
            <person name="Springer T.A."/>
            <person name="Umayam L.A."/>
            <person name="White O."/>
            <person name="White R.H."/>
            <person name="de Macario E.C."/>
            <person name="Ferry J.G."/>
            <person name="Jarrell K.F."/>
            <person name="Jing H."/>
            <person name="Macario A.J.L."/>
            <person name="Paulsen I.T."/>
            <person name="Pritchett M."/>
            <person name="Sowers K.R."/>
            <person name="Swanson R.V."/>
            <person name="Zinder S.H."/>
            <person name="Lander E."/>
            <person name="Metcalf W.W."/>
            <person name="Birren B."/>
        </authorList>
    </citation>
    <scope>NUCLEOTIDE SEQUENCE [LARGE SCALE GENOMIC DNA]</scope>
    <source>
        <strain>ATCC 35395 / DSM 2834 / JCM 12185 / C2A</strain>
    </source>
</reference>
<gene>
    <name evidence="1" type="primary">lig2</name>
    <name type="ordered locus">MA_2571</name>
</gene>
<name>DNLI2_METAC</name>
<proteinExistence type="inferred from homology"/>
<keyword id="KW-0067">ATP-binding</keyword>
<keyword id="KW-0131">Cell cycle</keyword>
<keyword id="KW-0132">Cell division</keyword>
<keyword id="KW-0227">DNA damage</keyword>
<keyword id="KW-0233">DNA recombination</keyword>
<keyword id="KW-0234">DNA repair</keyword>
<keyword id="KW-0235">DNA replication</keyword>
<keyword id="KW-0436">Ligase</keyword>
<keyword id="KW-0460">Magnesium</keyword>
<keyword id="KW-0479">Metal-binding</keyword>
<keyword id="KW-0547">Nucleotide-binding</keyword>
<keyword id="KW-1185">Reference proteome</keyword>
<comment type="function">
    <text evidence="1">DNA ligase that seals nicks in double-stranded DNA during DNA replication, DNA recombination and DNA repair.</text>
</comment>
<comment type="catalytic activity">
    <reaction evidence="1">
        <text>ATP + (deoxyribonucleotide)n-3'-hydroxyl + 5'-phospho-(deoxyribonucleotide)m = (deoxyribonucleotide)n+m + AMP + diphosphate.</text>
        <dbReference type="EC" id="6.5.1.1"/>
    </reaction>
</comment>
<comment type="cofactor">
    <cofactor evidence="1">
        <name>Mg(2+)</name>
        <dbReference type="ChEBI" id="CHEBI:18420"/>
    </cofactor>
</comment>
<comment type="similarity">
    <text evidence="1">Belongs to the ATP-dependent DNA ligase family.</text>
</comment>